<comment type="function">
    <text evidence="1">Protein S19 forms a complex with S13 that binds strongly to the 16S ribosomal RNA.</text>
</comment>
<comment type="subcellular location">
    <subcellularLocation>
        <location>Plastid</location>
        <location>Chloroplast</location>
    </subcellularLocation>
</comment>
<comment type="similarity">
    <text evidence="1">Belongs to the universal ribosomal protein uS19 family.</text>
</comment>
<reference key="1">
    <citation type="journal article" date="2008" name="BMC Plant Biol.">
        <title>Comparative chloroplast genomics and phylogenetics of Fagopyrum esculentum ssp. ancestrale - a wild ancestor of cultivated buckwheat.</title>
        <authorList>
            <person name="Logacheva M.D."/>
            <person name="Samigullin T.H."/>
            <person name="Dhingra A."/>
            <person name="Penin A.A."/>
        </authorList>
    </citation>
    <scope>NUCLEOTIDE SEQUENCE [LARGE SCALE GENOMIC DNA]</scope>
</reference>
<geneLocation type="chloroplast"/>
<accession>B2XWR4</accession>
<gene>
    <name evidence="1" type="primary">rps19</name>
</gene>
<keyword id="KW-0150">Chloroplast</keyword>
<keyword id="KW-0934">Plastid</keyword>
<keyword id="KW-0687">Ribonucleoprotein</keyword>
<keyword id="KW-0689">Ribosomal protein</keyword>
<keyword id="KW-0694">RNA-binding</keyword>
<keyword id="KW-0699">rRNA-binding</keyword>
<sequence length="92" mass="10669">MTRSLKKNPFVANHLLRKLDKLNTKEEKEIIVTWSRASTIIPTMIGHTIAIHNGREHLPVYITDRMIGHKLGEFSPTLNFRGHAKNDNRSRR</sequence>
<name>RR19_FAGEA</name>
<evidence type="ECO:0000255" key="1">
    <source>
        <dbReference type="HAMAP-Rule" id="MF_00531"/>
    </source>
</evidence>
<evidence type="ECO:0000305" key="2"/>
<dbReference type="EMBL" id="EU254477">
    <property type="protein sequence ID" value="ABY79773.1"/>
    <property type="molecule type" value="Genomic_DNA"/>
</dbReference>
<dbReference type="RefSeq" id="YP_001936558.1">
    <property type="nucleotide sequence ID" value="NC_010776.1"/>
</dbReference>
<dbReference type="SMR" id="B2XWR4"/>
<dbReference type="GeneID" id="6335980"/>
<dbReference type="GO" id="GO:0009507">
    <property type="term" value="C:chloroplast"/>
    <property type="evidence" value="ECO:0007669"/>
    <property type="project" value="UniProtKB-SubCell"/>
</dbReference>
<dbReference type="GO" id="GO:0005763">
    <property type="term" value="C:mitochondrial small ribosomal subunit"/>
    <property type="evidence" value="ECO:0007669"/>
    <property type="project" value="TreeGrafter"/>
</dbReference>
<dbReference type="GO" id="GO:0019843">
    <property type="term" value="F:rRNA binding"/>
    <property type="evidence" value="ECO:0007669"/>
    <property type="project" value="UniProtKB-UniRule"/>
</dbReference>
<dbReference type="GO" id="GO:0003735">
    <property type="term" value="F:structural constituent of ribosome"/>
    <property type="evidence" value="ECO:0007669"/>
    <property type="project" value="InterPro"/>
</dbReference>
<dbReference type="GO" id="GO:0000028">
    <property type="term" value="P:ribosomal small subunit assembly"/>
    <property type="evidence" value="ECO:0007669"/>
    <property type="project" value="TreeGrafter"/>
</dbReference>
<dbReference type="GO" id="GO:0006412">
    <property type="term" value="P:translation"/>
    <property type="evidence" value="ECO:0007669"/>
    <property type="project" value="UniProtKB-UniRule"/>
</dbReference>
<dbReference type="FunFam" id="3.30.860.10:FF:000001">
    <property type="entry name" value="30S ribosomal protein S19"/>
    <property type="match status" value="1"/>
</dbReference>
<dbReference type="Gene3D" id="3.30.860.10">
    <property type="entry name" value="30s Ribosomal Protein S19, Chain A"/>
    <property type="match status" value="1"/>
</dbReference>
<dbReference type="HAMAP" id="MF_00531">
    <property type="entry name" value="Ribosomal_uS19"/>
    <property type="match status" value="1"/>
</dbReference>
<dbReference type="InterPro" id="IPR002222">
    <property type="entry name" value="Ribosomal_uS19"/>
</dbReference>
<dbReference type="InterPro" id="IPR005732">
    <property type="entry name" value="Ribosomal_uS19_bac-type"/>
</dbReference>
<dbReference type="InterPro" id="IPR020934">
    <property type="entry name" value="Ribosomal_uS19_CS"/>
</dbReference>
<dbReference type="InterPro" id="IPR023575">
    <property type="entry name" value="Ribosomal_uS19_SF"/>
</dbReference>
<dbReference type="NCBIfam" id="TIGR01050">
    <property type="entry name" value="rpsS_bact"/>
    <property type="match status" value="1"/>
</dbReference>
<dbReference type="PANTHER" id="PTHR11880">
    <property type="entry name" value="RIBOSOMAL PROTEIN S19P FAMILY MEMBER"/>
    <property type="match status" value="1"/>
</dbReference>
<dbReference type="PANTHER" id="PTHR11880:SF8">
    <property type="entry name" value="SMALL RIBOSOMAL SUBUNIT PROTEIN US19M"/>
    <property type="match status" value="1"/>
</dbReference>
<dbReference type="Pfam" id="PF00203">
    <property type="entry name" value="Ribosomal_S19"/>
    <property type="match status" value="1"/>
</dbReference>
<dbReference type="PIRSF" id="PIRSF002144">
    <property type="entry name" value="Ribosomal_S19"/>
    <property type="match status" value="1"/>
</dbReference>
<dbReference type="PRINTS" id="PR00975">
    <property type="entry name" value="RIBOSOMALS19"/>
</dbReference>
<dbReference type="SUPFAM" id="SSF54570">
    <property type="entry name" value="Ribosomal protein S19"/>
    <property type="match status" value="1"/>
</dbReference>
<dbReference type="PROSITE" id="PS00323">
    <property type="entry name" value="RIBOSOMAL_S19"/>
    <property type="match status" value="1"/>
</dbReference>
<organism>
    <name type="scientific">Fagopyrum esculentum subsp. ancestrale</name>
    <name type="common">Wild buckwheat</name>
    <dbReference type="NCBI Taxonomy" id="180217"/>
    <lineage>
        <taxon>Eukaryota</taxon>
        <taxon>Viridiplantae</taxon>
        <taxon>Streptophyta</taxon>
        <taxon>Embryophyta</taxon>
        <taxon>Tracheophyta</taxon>
        <taxon>Spermatophyta</taxon>
        <taxon>Magnoliopsida</taxon>
        <taxon>eudicotyledons</taxon>
        <taxon>Gunneridae</taxon>
        <taxon>Pentapetalae</taxon>
        <taxon>Caryophyllales</taxon>
        <taxon>Polygonaceae</taxon>
        <taxon>Polygonoideae</taxon>
        <taxon>Fagopyreae</taxon>
        <taxon>Fagopyrum</taxon>
    </lineage>
</organism>
<protein>
    <recommendedName>
        <fullName evidence="1">Small ribosomal subunit protein uS19c</fullName>
    </recommendedName>
    <alternativeName>
        <fullName evidence="2">30S ribosomal protein S19, chloroplastic</fullName>
    </alternativeName>
</protein>
<proteinExistence type="inferred from homology"/>
<feature type="chain" id="PRO_0000354353" description="Small ribosomal subunit protein uS19c">
    <location>
        <begin position="1"/>
        <end position="92"/>
    </location>
</feature>